<protein>
    <recommendedName>
        <fullName>Putative lipid kinase SAUSA300_0711</fullName>
        <ecNumber>2.7.1.-</ecNumber>
    </recommendedName>
</protein>
<accession>Q2FIR4</accession>
<gene>
    <name type="ordered locus">SAUSA300_0711</name>
</gene>
<dbReference type="EC" id="2.7.1.-"/>
<dbReference type="EMBL" id="CP000255">
    <property type="protein sequence ID" value="ABD21308.1"/>
    <property type="molecule type" value="Genomic_DNA"/>
</dbReference>
<dbReference type="RefSeq" id="WP_000429014.1">
    <property type="nucleotide sequence ID" value="NZ_CP027476.1"/>
</dbReference>
<dbReference type="SMR" id="Q2FIR4"/>
<dbReference type="KEGG" id="saa:SAUSA300_0711"/>
<dbReference type="HOGENOM" id="CLU_045532_1_0_9"/>
<dbReference type="OMA" id="YIGTNRI"/>
<dbReference type="Proteomes" id="UP000001939">
    <property type="component" value="Chromosome"/>
</dbReference>
<dbReference type="GO" id="GO:0005886">
    <property type="term" value="C:plasma membrane"/>
    <property type="evidence" value="ECO:0007669"/>
    <property type="project" value="TreeGrafter"/>
</dbReference>
<dbReference type="GO" id="GO:0005524">
    <property type="term" value="F:ATP binding"/>
    <property type="evidence" value="ECO:0007669"/>
    <property type="project" value="UniProtKB-KW"/>
</dbReference>
<dbReference type="GO" id="GO:0004143">
    <property type="term" value="F:ATP-dependent diacylglycerol kinase activity"/>
    <property type="evidence" value="ECO:0007669"/>
    <property type="project" value="TreeGrafter"/>
</dbReference>
<dbReference type="GO" id="GO:0046872">
    <property type="term" value="F:metal ion binding"/>
    <property type="evidence" value="ECO:0007669"/>
    <property type="project" value="UniProtKB-KW"/>
</dbReference>
<dbReference type="GO" id="GO:0008654">
    <property type="term" value="P:phospholipid biosynthetic process"/>
    <property type="evidence" value="ECO:0007669"/>
    <property type="project" value="UniProtKB-KW"/>
</dbReference>
<dbReference type="Gene3D" id="2.60.200.40">
    <property type="match status" value="1"/>
</dbReference>
<dbReference type="Gene3D" id="3.40.50.10330">
    <property type="entry name" value="Probable inorganic polyphosphate/atp-NAD kinase, domain 1"/>
    <property type="match status" value="1"/>
</dbReference>
<dbReference type="InterPro" id="IPR017438">
    <property type="entry name" value="ATP-NAD_kinase_N"/>
</dbReference>
<dbReference type="InterPro" id="IPR005218">
    <property type="entry name" value="Diacylglycerol/lipid_kinase"/>
</dbReference>
<dbReference type="InterPro" id="IPR001206">
    <property type="entry name" value="Diacylglycerol_kinase_cat_dom"/>
</dbReference>
<dbReference type="InterPro" id="IPR050187">
    <property type="entry name" value="Lipid_Phosphate_FormReg"/>
</dbReference>
<dbReference type="InterPro" id="IPR016064">
    <property type="entry name" value="NAD/diacylglycerol_kinase_sf"/>
</dbReference>
<dbReference type="InterPro" id="IPR045540">
    <property type="entry name" value="YegS/DAGK_C"/>
</dbReference>
<dbReference type="NCBIfam" id="TIGR00147">
    <property type="entry name" value="YegS/Rv2252/BmrU family lipid kinase"/>
    <property type="match status" value="1"/>
</dbReference>
<dbReference type="PANTHER" id="PTHR12358:SF106">
    <property type="entry name" value="LIPID KINASE YEGS"/>
    <property type="match status" value="1"/>
</dbReference>
<dbReference type="PANTHER" id="PTHR12358">
    <property type="entry name" value="SPHINGOSINE KINASE"/>
    <property type="match status" value="1"/>
</dbReference>
<dbReference type="Pfam" id="PF00781">
    <property type="entry name" value="DAGK_cat"/>
    <property type="match status" value="1"/>
</dbReference>
<dbReference type="Pfam" id="PF19279">
    <property type="entry name" value="YegS_C"/>
    <property type="match status" value="1"/>
</dbReference>
<dbReference type="SMART" id="SM00046">
    <property type="entry name" value="DAGKc"/>
    <property type="match status" value="1"/>
</dbReference>
<dbReference type="SUPFAM" id="SSF111331">
    <property type="entry name" value="NAD kinase/diacylglycerol kinase-like"/>
    <property type="match status" value="1"/>
</dbReference>
<dbReference type="PROSITE" id="PS50146">
    <property type="entry name" value="DAGK"/>
    <property type="match status" value="1"/>
</dbReference>
<keyword id="KW-0067">ATP-binding</keyword>
<keyword id="KW-0418">Kinase</keyword>
<keyword id="KW-0444">Lipid biosynthesis</keyword>
<keyword id="KW-0443">Lipid metabolism</keyword>
<keyword id="KW-0460">Magnesium</keyword>
<keyword id="KW-0479">Metal-binding</keyword>
<keyword id="KW-0547">Nucleotide-binding</keyword>
<keyword id="KW-0594">Phospholipid biosynthesis</keyword>
<keyword id="KW-1208">Phospholipid metabolism</keyword>
<keyword id="KW-0808">Transferase</keyword>
<reference key="1">
    <citation type="journal article" date="2006" name="Lancet">
        <title>Complete genome sequence of USA300, an epidemic clone of community-acquired meticillin-resistant Staphylococcus aureus.</title>
        <authorList>
            <person name="Diep B.A."/>
            <person name="Gill S.R."/>
            <person name="Chang R.F."/>
            <person name="Phan T.H."/>
            <person name="Chen J.H."/>
            <person name="Davidson M.G."/>
            <person name="Lin F."/>
            <person name="Lin J."/>
            <person name="Carleton H.A."/>
            <person name="Mongodin E.F."/>
            <person name="Sensabaugh G.F."/>
            <person name="Perdreau-Remington F."/>
        </authorList>
    </citation>
    <scope>NUCLEOTIDE SEQUENCE [LARGE SCALE GENOMIC DNA]</scope>
    <source>
        <strain>USA300</strain>
    </source>
</reference>
<organism>
    <name type="scientific">Staphylococcus aureus (strain USA300)</name>
    <dbReference type="NCBI Taxonomy" id="367830"/>
    <lineage>
        <taxon>Bacteria</taxon>
        <taxon>Bacillati</taxon>
        <taxon>Bacillota</taxon>
        <taxon>Bacilli</taxon>
        <taxon>Bacillales</taxon>
        <taxon>Staphylococcaceae</taxon>
        <taxon>Staphylococcus</taxon>
    </lineage>
</organism>
<feature type="chain" id="PRO_0000386507" description="Putative lipid kinase SAUSA300_0711">
    <location>
        <begin position="1"/>
        <end position="305"/>
    </location>
</feature>
<feature type="domain" description="DAGKc" evidence="2">
    <location>
        <begin position="3"/>
        <end position="139"/>
    </location>
</feature>
<feature type="active site" description="Proton acceptor" evidence="1">
    <location>
        <position position="281"/>
    </location>
</feature>
<feature type="binding site" evidence="2">
    <location>
        <position position="44"/>
    </location>
    <ligand>
        <name>ATP</name>
        <dbReference type="ChEBI" id="CHEBI:30616"/>
    </ligand>
</feature>
<feature type="binding site" evidence="2">
    <location>
        <begin position="74"/>
        <end position="80"/>
    </location>
    <ligand>
        <name>ATP</name>
        <dbReference type="ChEBI" id="CHEBI:30616"/>
    </ligand>
</feature>
<feature type="binding site" evidence="2">
    <location>
        <position position="101"/>
    </location>
    <ligand>
        <name>ATP</name>
        <dbReference type="ChEBI" id="CHEBI:30616"/>
    </ligand>
</feature>
<feature type="binding site" evidence="1">
    <location>
        <position position="220"/>
    </location>
    <ligand>
        <name>Mg(2+)</name>
        <dbReference type="ChEBI" id="CHEBI:18420"/>
    </ligand>
</feature>
<feature type="binding site" evidence="1">
    <location>
        <position position="223"/>
    </location>
    <ligand>
        <name>Mg(2+)</name>
        <dbReference type="ChEBI" id="CHEBI:18420"/>
    </ligand>
</feature>
<feature type="binding site" evidence="1">
    <location>
        <position position="225"/>
    </location>
    <ligand>
        <name>Mg(2+)</name>
        <dbReference type="ChEBI" id="CHEBI:18420"/>
    </ligand>
</feature>
<sequence>MENKYTHGVLFYHEHSGLKNINQGIGEVTTALSSICKHLSIQLSENEGDIIKYCQEIKTKNYAKDVDILFILGGDGTVNELINGVMTHDLQLPIGILPGGTFNDFTKTLNIAPNHKQASEQMISAQVGTYDVIKINNQYALNFVGLGLIVQNAENVQDGSKDIFGKLSYIGSTVKTLLNPTQFNYQLSIDDKTYSGETTMILTANGPFIGGSRIPLTDLSPQDGELNTFIFNEQSFSILNDIFKKRDSMNWNEITQGIEHIPGKKISLTTDPAMKVDIDGEISLETPIDIEVIPNAIQLLTVNDL</sequence>
<proteinExistence type="inferred from homology"/>
<name>Y711_STAA3</name>
<evidence type="ECO:0000250" key="1"/>
<evidence type="ECO:0000255" key="2">
    <source>
        <dbReference type="PROSITE-ProRule" id="PRU00783"/>
    </source>
</evidence>
<evidence type="ECO:0000305" key="3"/>
<comment type="function">
    <text evidence="1">May catalyze the ATP-dependent phosphorylation of lipids other than diacylglycerol (DAG).</text>
</comment>
<comment type="cofactor">
    <cofactor evidence="1">
        <name>Mg(2+)</name>
        <dbReference type="ChEBI" id="CHEBI:18420"/>
    </cofactor>
    <text evidence="1">Binds 1 Mg(2+) ion per subunit. This ion appears to have a structural role and is required for catalytic activity.</text>
</comment>
<comment type="similarity">
    <text evidence="3">Belongs to the diacylglycerol/lipid kinase family.</text>
</comment>